<accession>Q2NIZ2</accession>
<evidence type="ECO:0000255" key="1">
    <source>
        <dbReference type="HAMAP-Rule" id="MF_01080"/>
    </source>
</evidence>
<gene>
    <name evidence="1" type="primary">truB</name>
    <name type="ordered locus">AYWB_484</name>
</gene>
<keyword id="KW-0413">Isomerase</keyword>
<keyword id="KW-0819">tRNA processing</keyword>
<name>TRUB_AYWBP</name>
<dbReference type="EC" id="5.4.99.25" evidence="1"/>
<dbReference type="EMBL" id="CP000061">
    <property type="protein sequence ID" value="ABC65601.1"/>
    <property type="molecule type" value="Genomic_DNA"/>
</dbReference>
<dbReference type="RefSeq" id="WP_011412764.1">
    <property type="nucleotide sequence ID" value="NC_007716.1"/>
</dbReference>
<dbReference type="SMR" id="Q2NIZ2"/>
<dbReference type="STRING" id="322098.AYWB_484"/>
<dbReference type="KEGG" id="ayw:AYWB_484"/>
<dbReference type="eggNOG" id="COG0130">
    <property type="taxonomic scope" value="Bacteria"/>
</dbReference>
<dbReference type="HOGENOM" id="CLU_032087_0_2_14"/>
<dbReference type="OrthoDB" id="9802309at2"/>
<dbReference type="PhylomeDB" id="Q2NIZ2"/>
<dbReference type="Proteomes" id="UP000001934">
    <property type="component" value="Chromosome"/>
</dbReference>
<dbReference type="GO" id="GO:0003723">
    <property type="term" value="F:RNA binding"/>
    <property type="evidence" value="ECO:0007669"/>
    <property type="project" value="InterPro"/>
</dbReference>
<dbReference type="GO" id="GO:0160148">
    <property type="term" value="F:tRNA pseudouridine(55) synthase activity"/>
    <property type="evidence" value="ECO:0007669"/>
    <property type="project" value="UniProtKB-EC"/>
</dbReference>
<dbReference type="GO" id="GO:1990481">
    <property type="term" value="P:mRNA pseudouridine synthesis"/>
    <property type="evidence" value="ECO:0007669"/>
    <property type="project" value="TreeGrafter"/>
</dbReference>
<dbReference type="GO" id="GO:0031119">
    <property type="term" value="P:tRNA pseudouridine synthesis"/>
    <property type="evidence" value="ECO:0007669"/>
    <property type="project" value="UniProtKB-UniRule"/>
</dbReference>
<dbReference type="CDD" id="cd02573">
    <property type="entry name" value="PseudoU_synth_EcTruB"/>
    <property type="match status" value="1"/>
</dbReference>
<dbReference type="Gene3D" id="3.30.2350.10">
    <property type="entry name" value="Pseudouridine synthase"/>
    <property type="match status" value="1"/>
</dbReference>
<dbReference type="HAMAP" id="MF_01080">
    <property type="entry name" value="TruB_bact"/>
    <property type="match status" value="1"/>
</dbReference>
<dbReference type="InterPro" id="IPR020103">
    <property type="entry name" value="PsdUridine_synth_cat_dom_sf"/>
</dbReference>
<dbReference type="InterPro" id="IPR002501">
    <property type="entry name" value="PsdUridine_synth_N"/>
</dbReference>
<dbReference type="InterPro" id="IPR014780">
    <property type="entry name" value="tRNA_psdUridine_synth_TruB"/>
</dbReference>
<dbReference type="NCBIfam" id="TIGR00431">
    <property type="entry name" value="TruB"/>
    <property type="match status" value="1"/>
</dbReference>
<dbReference type="PANTHER" id="PTHR13767:SF2">
    <property type="entry name" value="PSEUDOURIDYLATE SYNTHASE TRUB1"/>
    <property type="match status" value="1"/>
</dbReference>
<dbReference type="PANTHER" id="PTHR13767">
    <property type="entry name" value="TRNA-PSEUDOURIDINE SYNTHASE"/>
    <property type="match status" value="1"/>
</dbReference>
<dbReference type="Pfam" id="PF01509">
    <property type="entry name" value="TruB_N"/>
    <property type="match status" value="1"/>
</dbReference>
<dbReference type="SUPFAM" id="SSF55120">
    <property type="entry name" value="Pseudouridine synthase"/>
    <property type="match status" value="1"/>
</dbReference>
<proteinExistence type="inferred from homology"/>
<organism>
    <name type="scientific">Aster yellows witches'-broom phytoplasma (strain AYWB)</name>
    <dbReference type="NCBI Taxonomy" id="322098"/>
    <lineage>
        <taxon>Bacteria</taxon>
        <taxon>Bacillati</taxon>
        <taxon>Mycoplasmatota</taxon>
        <taxon>Mollicutes</taxon>
        <taxon>Acholeplasmatales</taxon>
        <taxon>Acholeplasmataceae</taxon>
        <taxon>Candidatus Phytoplasma</taxon>
        <taxon>16SrI (Aster yellows group)</taxon>
    </lineage>
</organism>
<reference key="1">
    <citation type="journal article" date="2006" name="J. Bacteriol.">
        <title>Living with genome instability: the adaptation of phytoplasmas to diverse environments of their insect and plant hosts.</title>
        <authorList>
            <person name="Bai X."/>
            <person name="Zhang J."/>
            <person name="Ewing A."/>
            <person name="Miller S.A."/>
            <person name="Jancso Radek A."/>
            <person name="Shevchenko D.V."/>
            <person name="Tsukerman K."/>
            <person name="Walunas T."/>
            <person name="Lapidus A."/>
            <person name="Campbell J.W."/>
            <person name="Hogenhout S.A."/>
        </authorList>
    </citation>
    <scope>NUCLEOTIDE SEQUENCE [LARGE SCALE GENOMIC DNA]</scope>
    <source>
        <strain>AYWB</strain>
    </source>
</reference>
<comment type="function">
    <text evidence="1">Responsible for synthesis of pseudouridine from uracil-55 in the psi GC loop of transfer RNAs.</text>
</comment>
<comment type="catalytic activity">
    <reaction evidence="1">
        <text>uridine(55) in tRNA = pseudouridine(55) in tRNA</text>
        <dbReference type="Rhea" id="RHEA:42532"/>
        <dbReference type="Rhea" id="RHEA-COMP:10101"/>
        <dbReference type="Rhea" id="RHEA-COMP:10102"/>
        <dbReference type="ChEBI" id="CHEBI:65314"/>
        <dbReference type="ChEBI" id="CHEBI:65315"/>
        <dbReference type="EC" id="5.4.99.25"/>
    </reaction>
</comment>
<comment type="similarity">
    <text evidence="1">Belongs to the pseudouridine synthase TruB family. Type 1 subfamily.</text>
</comment>
<protein>
    <recommendedName>
        <fullName evidence="1">tRNA pseudouridine synthase B</fullName>
        <ecNumber evidence="1">5.4.99.25</ecNumber>
    </recommendedName>
    <alternativeName>
        <fullName evidence="1">tRNA pseudouridine(55) synthase</fullName>
        <shortName evidence="1">Psi55 synthase</shortName>
    </alternativeName>
    <alternativeName>
        <fullName evidence="1">tRNA pseudouridylate synthase</fullName>
    </alternativeName>
    <alternativeName>
        <fullName evidence="1">tRNA-uridine isomerase</fullName>
    </alternativeName>
</protein>
<sequence>MNGFFLVNKPEKMTSHDVVFQIKKKFHFDKVGHTGTLDPLASGLLIVCVGKATKLAFLFDKLSKTYQGTFLFNKHYDTLDVKGKLLDTKNIPLNDFAIQTSFASFHQKKYWQIPPMFSAVKIKGQKMYRLARQNQVVDIPPREVFIHHFEKKSLFCHDQVDFLVHVSKGTYIRSLARDLALQLNTYGALLRLQRTAIGTHLLQNAKTIENLELNDLILDSIFFASYDELILNDYLIKLVKNGTYLDQRQIITQKPFIVKDSNKNFVAYYDILDENKYYPRYFF</sequence>
<feature type="chain" id="PRO_1000084545" description="tRNA pseudouridine synthase B">
    <location>
        <begin position="1"/>
        <end position="283"/>
    </location>
</feature>
<feature type="active site" description="Nucleophile" evidence="1">
    <location>
        <position position="38"/>
    </location>
</feature>